<reference key="1">
    <citation type="journal article" date="1998" name="Nature">
        <title>Deciphering the biology of Mycobacterium tuberculosis from the complete genome sequence.</title>
        <authorList>
            <person name="Cole S.T."/>
            <person name="Brosch R."/>
            <person name="Parkhill J."/>
            <person name="Garnier T."/>
            <person name="Churcher C.M."/>
            <person name="Harris D.E."/>
            <person name="Gordon S.V."/>
            <person name="Eiglmeier K."/>
            <person name="Gas S."/>
            <person name="Barry C.E. III"/>
            <person name="Tekaia F."/>
            <person name="Badcock K."/>
            <person name="Basham D."/>
            <person name="Brown D."/>
            <person name="Chillingworth T."/>
            <person name="Connor R."/>
            <person name="Davies R.M."/>
            <person name="Devlin K."/>
            <person name="Feltwell T."/>
            <person name="Gentles S."/>
            <person name="Hamlin N."/>
            <person name="Holroyd S."/>
            <person name="Hornsby T."/>
            <person name="Jagels K."/>
            <person name="Krogh A."/>
            <person name="McLean J."/>
            <person name="Moule S."/>
            <person name="Murphy L.D."/>
            <person name="Oliver S."/>
            <person name="Osborne J."/>
            <person name="Quail M.A."/>
            <person name="Rajandream M.A."/>
            <person name="Rogers J."/>
            <person name="Rutter S."/>
            <person name="Seeger K."/>
            <person name="Skelton S."/>
            <person name="Squares S."/>
            <person name="Squares R."/>
            <person name="Sulston J.E."/>
            <person name="Taylor K."/>
            <person name="Whitehead S."/>
            <person name="Barrell B.G."/>
        </authorList>
    </citation>
    <scope>NUCLEOTIDE SEQUENCE [LARGE SCALE GENOMIC DNA]</scope>
    <source>
        <strain>ATCC 25618 / H37Rv</strain>
    </source>
</reference>
<reference key="2">
    <citation type="journal article" date="2001" name="Proc. Natl. Acad. Sci. U.S.A.">
        <title>Regulation of the Mycobacterium tuberculosis hypoxic response gene encoding alpha -crystallin.</title>
        <authorList>
            <person name="Sherman D.R."/>
            <person name="Voskuil M."/>
            <person name="Schnappinger D."/>
            <person name="Liao R."/>
            <person name="Harrell M.I."/>
            <person name="Schoolnik G.K."/>
        </authorList>
    </citation>
    <scope>INDUCTION BY HYPOXIA</scope>
    <source>
        <strain>ATCC 25618 / H37Rv</strain>
    </source>
</reference>
<reference key="3">
    <citation type="journal article" date="2003" name="J. Exp. Med.">
        <title>Inhibition of respiration by nitric oxide induces a Mycobacterium tuberculosis dormancy program.</title>
        <authorList>
            <person name="Voskuil M.I."/>
            <person name="Schnappinger D."/>
            <person name="Visconti K.C."/>
            <person name="Harrell M.I."/>
            <person name="Dolganov G.M."/>
            <person name="Sherman D.R."/>
            <person name="Schoolnik G.K."/>
        </authorList>
    </citation>
    <scope>INDUCTION BY NITRIC OXIDE (NO) AND BY HYPOXIA</scope>
    <scope>DORMANCY REGULON</scope>
    <source>
        <strain>ATCC 25618 / H37Rv</strain>
    </source>
</reference>
<reference key="4">
    <citation type="journal article" date="2008" name="Cell Host Microbe">
        <title>Mycobacterium tuberculosis senses host-derived carbon monoxide during macrophage infection.</title>
        <authorList>
            <person name="Shiloh M.U."/>
            <person name="Manzanillo P."/>
            <person name="Cox J.S."/>
        </authorList>
    </citation>
    <scope>INDUCTION BY CARBON MONOXIDE (CO)</scope>
    <source>
        <strain>ATCC 35801 / TMC 107 / Erdman</strain>
    </source>
</reference>
<reference key="5">
    <citation type="journal article" date="2008" name="J. Biol. Chem.">
        <title>Heme oxygenase-1-derived carbon monoxide induces the Mycobacterium tuberculosis dormancy regulon.</title>
        <authorList>
            <person name="Kumar A."/>
            <person name="Deshane J.S."/>
            <person name="Crossman D.K."/>
            <person name="Bolisetty S."/>
            <person name="Yan B.S."/>
            <person name="Kramnik I."/>
            <person name="Agarwal A."/>
            <person name="Steyn A.J."/>
        </authorList>
    </citation>
    <scope>INDUCTION BY CARBON MONOXIDE (CO)</scope>
    <scope>DORMANCY REGULON</scope>
    <source>
        <strain>ATCC 25618 / H37Rv</strain>
    </source>
</reference>
<reference key="6">
    <citation type="journal article" date="2011" name="Mol. Cell. Proteomics">
        <title>Proteogenomic analysis of Mycobacterium tuberculosis by high resolution mass spectrometry.</title>
        <authorList>
            <person name="Kelkar D.S."/>
            <person name="Kumar D."/>
            <person name="Kumar P."/>
            <person name="Balakrishnan L."/>
            <person name="Muthusamy B."/>
            <person name="Yadav A.K."/>
            <person name="Shrivastava P."/>
            <person name="Marimuthu A."/>
            <person name="Anand S."/>
            <person name="Sundaram H."/>
            <person name="Kingsbury R."/>
            <person name="Harsha H.C."/>
            <person name="Nair B."/>
            <person name="Prasad T.S."/>
            <person name="Chauhan D.S."/>
            <person name="Katoch K."/>
            <person name="Katoch V.M."/>
            <person name="Kumar P."/>
            <person name="Chaerkady R."/>
            <person name="Ramachandran S."/>
            <person name="Dash D."/>
            <person name="Pandey A."/>
        </authorList>
    </citation>
    <scope>IDENTIFICATION BY MASS SPECTROMETRY [LARGE SCALE ANALYSIS]</scope>
    <source>
        <strain>ATCC 25618 / H37Rv</strain>
    </source>
</reference>
<dbReference type="EMBL" id="AL123456">
    <property type="protein sequence ID" value="CCP45937.1"/>
    <property type="molecule type" value="Genomic_DNA"/>
</dbReference>
<dbReference type="PIR" id="F70922">
    <property type="entry name" value="F70922"/>
</dbReference>
<dbReference type="RefSeq" id="NP_217643.1">
    <property type="nucleotide sequence ID" value="NC_000962.3"/>
</dbReference>
<dbReference type="RefSeq" id="WP_003416354.1">
    <property type="nucleotide sequence ID" value="NZ_NVQJ01000019.1"/>
</dbReference>
<dbReference type="SMR" id="P9WL07"/>
<dbReference type="STRING" id="83332.Rv3127"/>
<dbReference type="PaxDb" id="83332-Rv3127"/>
<dbReference type="DNASU" id="888850"/>
<dbReference type="GeneID" id="888850"/>
<dbReference type="KEGG" id="mtu:Rv3127"/>
<dbReference type="KEGG" id="mtv:RVBD_3127"/>
<dbReference type="TubercuList" id="Rv3127"/>
<dbReference type="eggNOG" id="COG0778">
    <property type="taxonomic scope" value="Bacteria"/>
</dbReference>
<dbReference type="InParanoid" id="P9WL07"/>
<dbReference type="OrthoDB" id="8156917at2"/>
<dbReference type="PhylomeDB" id="P9WL07"/>
<dbReference type="Proteomes" id="UP000001584">
    <property type="component" value="Chromosome"/>
</dbReference>
<dbReference type="GO" id="GO:0009274">
    <property type="term" value="C:peptidoglycan-based cell wall"/>
    <property type="evidence" value="ECO:0007005"/>
    <property type="project" value="MTBBASE"/>
</dbReference>
<dbReference type="GO" id="GO:0005886">
    <property type="term" value="C:plasma membrane"/>
    <property type="evidence" value="ECO:0007005"/>
    <property type="project" value="MTBBASE"/>
</dbReference>
<dbReference type="GO" id="GO:0016491">
    <property type="term" value="F:oxidoreductase activity"/>
    <property type="evidence" value="ECO:0000318"/>
    <property type="project" value="GO_Central"/>
</dbReference>
<dbReference type="FunFam" id="3.40.109.10:FF:000014">
    <property type="entry name" value="Putative NAD(P)H nitroreductase acg"/>
    <property type="match status" value="1"/>
</dbReference>
<dbReference type="Gene3D" id="3.40.109.10">
    <property type="entry name" value="NADH Oxidase"/>
    <property type="match status" value="1"/>
</dbReference>
<dbReference type="InterPro" id="IPR000415">
    <property type="entry name" value="Nitroreductase-like"/>
</dbReference>
<dbReference type="InterPro" id="IPR050627">
    <property type="entry name" value="Nitroreductase/BluB"/>
</dbReference>
<dbReference type="NCBIfam" id="NF047509">
    <property type="entry name" value="Rv3131_FMN_oxido"/>
    <property type="match status" value="1"/>
</dbReference>
<dbReference type="PANTHER" id="PTHR23026:SF123">
    <property type="entry name" value="NAD(P)H NITROREDUCTASE RV3131-RELATED"/>
    <property type="match status" value="1"/>
</dbReference>
<dbReference type="PANTHER" id="PTHR23026">
    <property type="entry name" value="NADPH NITROREDUCTASE"/>
    <property type="match status" value="1"/>
</dbReference>
<dbReference type="SUPFAM" id="SSF55469">
    <property type="entry name" value="FMN-dependent nitroreductase-like"/>
    <property type="match status" value="2"/>
</dbReference>
<sequence length="344" mass="38521">MLKNAVLLACRAPSVHNSQPWRWVAESGSEHTTVHLFVNRHRTVPATDHSGRQAIISCGAVLDHLRIAMTAAHWQANITRFPQPNQPDQLATVEFSPIDHVTAGQRNRAQAILQRRTDRLPFDSPMYWHLFEPALRDAVDKDVAMLDVVSDDQRTRLVVASQLSEVLRRDDPYYHAELEWWTSPFVLAHGVPPDTLASDAERLRVDLGRDFPVRSYQNRRAELADDRSKVLVLSTPSDTRADALRCGEVLSTILLECTMAGMATCTLTHLIESSDSRDIVRGLTRQRGEPQALIRVGIAPPLAAVPAPTPRRPLDSVLQIRQTPEKGRNASDRNARETGWFSPP</sequence>
<keyword id="KW-1185">Reference proteome</keyword>
<accession>P9WL07</accession>
<accession>L0TBX4</accession>
<accession>O05800</accession>
<accession>Q7D629</accession>
<feature type="chain" id="PRO_0000392938" description="Uncharacterized protein Rv3127">
    <location>
        <begin position="1"/>
        <end position="344"/>
    </location>
</feature>
<feature type="region of interest" description="Disordered" evidence="1">
    <location>
        <begin position="304"/>
        <end position="344"/>
    </location>
</feature>
<feature type="compositionally biased region" description="Basic and acidic residues" evidence="1">
    <location>
        <begin position="323"/>
        <end position="336"/>
    </location>
</feature>
<comment type="induction">
    <text evidence="2 3 4 5">A member of the dormancy regulon. Induced in response to reduced oxygen tension (hypoxia), low levels of nitric oxide (NO) and carbon monoxide (CO). It is hoped that this regulon will give insight into the latent, or dormant phase of infection.</text>
</comment>
<organism>
    <name type="scientific">Mycobacterium tuberculosis (strain ATCC 25618 / H37Rv)</name>
    <dbReference type="NCBI Taxonomy" id="83332"/>
    <lineage>
        <taxon>Bacteria</taxon>
        <taxon>Bacillati</taxon>
        <taxon>Actinomycetota</taxon>
        <taxon>Actinomycetes</taxon>
        <taxon>Mycobacteriales</taxon>
        <taxon>Mycobacteriaceae</taxon>
        <taxon>Mycobacterium</taxon>
        <taxon>Mycobacterium tuberculosis complex</taxon>
    </lineage>
</organism>
<evidence type="ECO:0000256" key="1">
    <source>
        <dbReference type="SAM" id="MobiDB-lite"/>
    </source>
</evidence>
<evidence type="ECO:0000269" key="2">
    <source>
    </source>
</evidence>
<evidence type="ECO:0000269" key="3">
    <source>
    </source>
</evidence>
<evidence type="ECO:0000269" key="4">
    <source>
    </source>
</evidence>
<evidence type="ECO:0000269" key="5">
    <source>
    </source>
</evidence>
<gene>
    <name type="ordered locus">Rv3127</name>
</gene>
<proteinExistence type="evidence at protein level"/>
<protein>
    <recommendedName>
        <fullName>Uncharacterized protein Rv3127</fullName>
    </recommendedName>
</protein>
<name>Y3127_MYCTU</name>